<name>YBOX3_RAT</name>
<proteinExistence type="evidence at protein level"/>
<comment type="function">
    <text evidence="1">Binds to the GM-CSF promoter. Seems to act as a repressor. Also binds to full-length mRNA and to short RNA sequences containing the consensus site 5'-UCCAUCA-3'. May have a role in translation repression (By similarity).</text>
</comment>
<comment type="subunit">
    <text evidence="2 3">Found in a mRNP complex with YBX2. Interacts with RRP1B.</text>
</comment>
<comment type="subcellular location">
    <subcellularLocation>
        <location evidence="1">Cytoplasm</location>
    </subcellularLocation>
    <subcellularLocation>
        <location evidence="1">Nucleus</location>
    </subcellularLocation>
</comment>
<comment type="alternative products">
    <event type="alternative splicing"/>
    <isoform>
        <id>Q62764-1</id>
        <name>1</name>
        <sequence type="displayed"/>
    </isoform>
    <isoform>
        <id>Q62764-2</id>
        <name>2</name>
        <sequence type="described" ref="VSP_001137"/>
    </isoform>
    <text>Additional isoforms seem to exist.</text>
</comment>
<comment type="tissue specificity">
    <text>Abundant in the skeletal muscle, spleen and fetal liver.</text>
</comment>
<gene>
    <name type="primary">Ybx3</name>
    <name type="synonym">Csda</name>
    <name type="synonym">Dbpa</name>
    <name type="synonym">Yb2</name>
</gene>
<feature type="initiator methionine" description="Removed" evidence="2">
    <location>
        <position position="1"/>
    </location>
</feature>
<feature type="chain" id="PRO_0000100216" description="Y-box-binding protein 3">
    <location>
        <begin position="2"/>
        <end position="361"/>
    </location>
</feature>
<feature type="domain" description="CSD">
    <location>
        <begin position="85"/>
        <end position="149"/>
    </location>
</feature>
<feature type="region of interest" description="Disordered" evidence="4">
    <location>
        <begin position="1"/>
        <end position="73"/>
    </location>
</feature>
<feature type="region of interest" description="Disordered" evidence="4">
    <location>
        <begin position="173"/>
        <end position="361"/>
    </location>
</feature>
<feature type="compositionally biased region" description="Low complexity" evidence="4">
    <location>
        <begin position="1"/>
        <end position="23"/>
    </location>
</feature>
<feature type="compositionally biased region" description="Low complexity" evidence="4">
    <location>
        <begin position="33"/>
        <end position="71"/>
    </location>
</feature>
<feature type="compositionally biased region" description="Basic residues" evidence="4">
    <location>
        <begin position="214"/>
        <end position="230"/>
    </location>
</feature>
<feature type="compositionally biased region" description="Polar residues" evidence="4">
    <location>
        <begin position="303"/>
        <end position="313"/>
    </location>
</feature>
<feature type="compositionally biased region" description="Basic residues" evidence="4">
    <location>
        <begin position="316"/>
        <end position="329"/>
    </location>
</feature>
<feature type="modified residue" description="N-acetylserine" evidence="2">
    <location>
        <position position="2"/>
    </location>
</feature>
<feature type="modified residue" description="Phosphoserine" evidence="6">
    <location>
        <position position="2"/>
    </location>
</feature>
<feature type="modified residue" description="Phosphoserine" evidence="6">
    <location>
        <position position="33"/>
    </location>
</feature>
<feature type="modified residue" description="Phosphoserine" evidence="6">
    <location>
        <position position="52"/>
    </location>
</feature>
<feature type="modified residue" description="Phosphoserine" evidence="2">
    <location>
        <position position="126"/>
    </location>
</feature>
<feature type="modified residue" description="Phosphoserine" evidence="6">
    <location>
        <position position="193"/>
    </location>
</feature>
<feature type="modified residue" description="Phosphoserine" evidence="6">
    <location>
        <position position="195"/>
    </location>
</feature>
<feature type="modified residue" description="Phosphoserine" evidence="6">
    <location>
        <position position="196"/>
    </location>
</feature>
<feature type="modified residue" description="Omega-N-methylarginine" evidence="2">
    <location>
        <position position="243"/>
    </location>
</feature>
<feature type="modified residue" description="Phosphoserine" evidence="2">
    <location>
        <position position="313"/>
    </location>
</feature>
<feature type="modified residue" description="Omega-N-methylarginine" evidence="2">
    <location>
        <position position="315"/>
    </location>
</feature>
<feature type="modified residue" description="Phosphoserine" evidence="6">
    <location>
        <position position="335"/>
    </location>
</feature>
<feature type="modified residue" description="Phosphoserine" evidence="6">
    <location>
        <position position="358"/>
    </location>
</feature>
<feature type="modified residue" description="Phosphoserine" evidence="6">
    <location>
        <position position="359"/>
    </location>
</feature>
<feature type="splice variant" id="VSP_001137" description="In isoform 2." evidence="5">
    <location>
        <begin position="184"/>
        <end position="252"/>
    </location>
</feature>
<feature type="sequence conflict" description="In Ref. 2; BAA05907." evidence="5" ref="2">
    <original>L</original>
    <variation>H</variation>
    <location>
        <position position="14"/>
    </location>
</feature>
<feature type="sequence conflict" description="In Ref. 2; BAA05907." evidence="5" ref="2">
    <original>SPGGDAAPGPAPASSAPAGSEDA</original>
    <variation>APARASPRARPGLISPRGKRGR</variation>
    <location>
        <begin position="52"/>
        <end position="74"/>
    </location>
</feature>
<feature type="sequence conflict" description="In Ref. 2; BAA05907." evidence="5" ref="2">
    <original>PR</original>
    <variation>HV</variation>
    <location>
        <begin position="120"/>
        <end position="121"/>
    </location>
</feature>
<sequence>MSEAGEATTGGTTLPQAAADAPAAAPPDPAPKSPAASGAPQAPAPAALLAGSPGGDAAPGPAPASSAPAGSEDAEKKVLATKVLGTVKWFNVRNGYGFINRNDTKEDVFVHQTAIKKNNPRKYLRSVGDGETVEFDVVEGEKGAEAANVTGPDGVPVEGSRYAADRRRYRRGYYGRRRGPPRNYAGEEEEEGSGSSEGFEPPAADGQFSGARNQLRRPQYRPPYRQRRFPPYHVGQTFDRRSRVFPHPNRMQAGEIGEMKDGVPEGAQLQVHRNPTYRPRFRRGPARPRPAPAIGEAEDKENQQAANGPNQPSARRGFRRPYNYRRRPRPLNAVSQDGKETKAGEAPTENPAPATEQSSAE</sequence>
<protein>
    <recommendedName>
        <fullName>Y-box-binding protein 3</fullName>
    </recommendedName>
    <alternativeName>
        <fullName>Cold shock domain-containing protein A</fullName>
    </alternativeName>
    <alternativeName>
        <fullName>DNA-binding protein A</fullName>
    </alternativeName>
    <alternativeName>
        <fullName>Muscle Y-box protein YB2</fullName>
    </alternativeName>
    <alternativeName>
        <fullName>RYB-A</fullName>
    </alternativeName>
    <alternativeName>
        <fullName>Y-box-binding protein A</fullName>
    </alternativeName>
</protein>
<dbReference type="EMBL" id="U22893">
    <property type="protein sequence ID" value="AAB60520.1"/>
    <property type="molecule type" value="mRNA"/>
</dbReference>
<dbReference type="EMBL" id="D28557">
    <property type="protein sequence ID" value="BAA05907.1"/>
    <property type="molecule type" value="mRNA"/>
</dbReference>
<dbReference type="PIR" id="S51608">
    <property type="entry name" value="S51608"/>
</dbReference>
<dbReference type="RefSeq" id="NP_114185.3">
    <molecule id="Q62764-1"/>
    <property type="nucleotide sequence ID" value="NM_031979.3"/>
</dbReference>
<dbReference type="RefSeq" id="XP_038964378.1">
    <molecule id="Q62764-2"/>
    <property type="nucleotide sequence ID" value="XM_039108450.2"/>
</dbReference>
<dbReference type="SMR" id="Q62764"/>
<dbReference type="BioGRID" id="249842">
    <property type="interactions" value="2"/>
</dbReference>
<dbReference type="FunCoup" id="Q62764">
    <property type="interactions" value="480"/>
</dbReference>
<dbReference type="IntAct" id="Q62764">
    <property type="interactions" value="3"/>
</dbReference>
<dbReference type="MINT" id="Q62764"/>
<dbReference type="STRING" id="10116.ENSRNOP00000007427"/>
<dbReference type="iPTMnet" id="Q62764"/>
<dbReference type="PhosphoSitePlus" id="Q62764"/>
<dbReference type="jPOST" id="Q62764"/>
<dbReference type="PaxDb" id="10116-ENSRNOP00000007427"/>
<dbReference type="GeneID" id="83807"/>
<dbReference type="KEGG" id="rno:83807"/>
<dbReference type="UCSC" id="RGD:621056">
    <molecule id="Q62764-1"/>
    <property type="organism name" value="rat"/>
</dbReference>
<dbReference type="AGR" id="RGD:621056"/>
<dbReference type="CTD" id="8531"/>
<dbReference type="RGD" id="621056">
    <property type="gene designation" value="Ybx3"/>
</dbReference>
<dbReference type="eggNOG" id="KOG3070">
    <property type="taxonomic scope" value="Eukaryota"/>
</dbReference>
<dbReference type="InParanoid" id="Q62764"/>
<dbReference type="OrthoDB" id="91839at9989"/>
<dbReference type="PhylomeDB" id="Q62764"/>
<dbReference type="PRO" id="PR:Q62764"/>
<dbReference type="Proteomes" id="UP000002494">
    <property type="component" value="Unplaced"/>
</dbReference>
<dbReference type="GO" id="GO:0005923">
    <property type="term" value="C:bicellular tight junction"/>
    <property type="evidence" value="ECO:0000266"/>
    <property type="project" value="RGD"/>
</dbReference>
<dbReference type="GO" id="GO:0005737">
    <property type="term" value="C:cytoplasm"/>
    <property type="evidence" value="ECO:0000266"/>
    <property type="project" value="RGD"/>
</dbReference>
<dbReference type="GO" id="GO:0005921">
    <property type="term" value="C:gap junction"/>
    <property type="evidence" value="ECO:0000314"/>
    <property type="project" value="MGI"/>
</dbReference>
<dbReference type="GO" id="GO:0005634">
    <property type="term" value="C:nucleus"/>
    <property type="evidence" value="ECO:0000266"/>
    <property type="project" value="RGD"/>
</dbReference>
<dbReference type="GO" id="GO:0048471">
    <property type="term" value="C:perinuclear region of cytoplasm"/>
    <property type="evidence" value="ECO:0000266"/>
    <property type="project" value="RGD"/>
</dbReference>
<dbReference type="GO" id="GO:0045202">
    <property type="term" value="C:synapse"/>
    <property type="evidence" value="ECO:0000266"/>
    <property type="project" value="RGD"/>
</dbReference>
<dbReference type="GO" id="GO:0003677">
    <property type="term" value="F:DNA binding"/>
    <property type="evidence" value="ECO:0000266"/>
    <property type="project" value="RGD"/>
</dbReference>
<dbReference type="GO" id="GO:0003730">
    <property type="term" value="F:mRNA 3'-UTR binding"/>
    <property type="evidence" value="ECO:0000266"/>
    <property type="project" value="RGD"/>
</dbReference>
<dbReference type="GO" id="GO:0003676">
    <property type="term" value="F:nucleic acid binding"/>
    <property type="evidence" value="ECO:0000318"/>
    <property type="project" value="GO_Central"/>
</dbReference>
<dbReference type="GO" id="GO:0043021">
    <property type="term" value="F:ribonucleoprotein complex binding"/>
    <property type="evidence" value="ECO:0000266"/>
    <property type="project" value="RGD"/>
</dbReference>
<dbReference type="GO" id="GO:0003723">
    <property type="term" value="F:RNA binding"/>
    <property type="evidence" value="ECO:0000266"/>
    <property type="project" value="RGD"/>
</dbReference>
<dbReference type="GO" id="GO:0000977">
    <property type="term" value="F:RNA polymerase II transcription regulatory region sequence-specific DNA binding"/>
    <property type="evidence" value="ECO:0000266"/>
    <property type="project" value="RGD"/>
</dbReference>
<dbReference type="GO" id="GO:0003697">
    <property type="term" value="F:single-stranded DNA binding"/>
    <property type="evidence" value="ECO:0000314"/>
    <property type="project" value="RGD"/>
</dbReference>
<dbReference type="GO" id="GO:0031267">
    <property type="term" value="F:small GTPase binding"/>
    <property type="evidence" value="ECO:0000266"/>
    <property type="project" value="RGD"/>
</dbReference>
<dbReference type="GO" id="GO:0031100">
    <property type="term" value="P:animal organ regeneration"/>
    <property type="evidence" value="ECO:0000270"/>
    <property type="project" value="RGD"/>
</dbReference>
<dbReference type="GO" id="GO:0006915">
    <property type="term" value="P:apoptotic process"/>
    <property type="evidence" value="ECO:0000266"/>
    <property type="project" value="RGD"/>
</dbReference>
<dbReference type="GO" id="GO:0071474">
    <property type="term" value="P:cellular hyperosmotic response"/>
    <property type="evidence" value="ECO:0000266"/>
    <property type="project" value="RGD"/>
</dbReference>
<dbReference type="GO" id="GO:0071356">
    <property type="term" value="P:cellular response to tumor necrosis factor"/>
    <property type="evidence" value="ECO:0000266"/>
    <property type="project" value="RGD"/>
</dbReference>
<dbReference type="GO" id="GO:0035234">
    <property type="term" value="P:ectopic germ cell programmed cell death"/>
    <property type="evidence" value="ECO:0000266"/>
    <property type="project" value="RGD"/>
</dbReference>
<dbReference type="GO" id="GO:0009566">
    <property type="term" value="P:fertilization"/>
    <property type="evidence" value="ECO:0000266"/>
    <property type="project" value="RGD"/>
</dbReference>
<dbReference type="GO" id="GO:0001701">
    <property type="term" value="P:in utero embryonic development"/>
    <property type="evidence" value="ECO:0000266"/>
    <property type="project" value="RGD"/>
</dbReference>
<dbReference type="GO" id="GO:0008584">
    <property type="term" value="P:male gonad development"/>
    <property type="evidence" value="ECO:0000266"/>
    <property type="project" value="RGD"/>
</dbReference>
<dbReference type="GO" id="GO:0043066">
    <property type="term" value="P:negative regulation of apoptotic process"/>
    <property type="evidence" value="ECO:0000266"/>
    <property type="project" value="RGD"/>
</dbReference>
<dbReference type="GO" id="GO:0051093">
    <property type="term" value="P:negative regulation of developmental process"/>
    <property type="evidence" value="ECO:0000266"/>
    <property type="project" value="RGD"/>
</dbReference>
<dbReference type="GO" id="GO:1902042">
    <property type="term" value="P:negative regulation of extrinsic apoptotic signaling pathway via death domain receptors"/>
    <property type="evidence" value="ECO:0000266"/>
    <property type="project" value="RGD"/>
</dbReference>
<dbReference type="GO" id="GO:1902219">
    <property type="term" value="P:negative regulation of intrinsic apoptotic signaling pathway in response to osmotic stress"/>
    <property type="evidence" value="ECO:0000266"/>
    <property type="project" value="RGD"/>
</dbReference>
<dbReference type="GO" id="GO:0060546">
    <property type="term" value="P:negative regulation of necroptotic process"/>
    <property type="evidence" value="ECO:0000266"/>
    <property type="project" value="RGD"/>
</dbReference>
<dbReference type="GO" id="GO:2000242">
    <property type="term" value="P:negative regulation of reproductive process"/>
    <property type="evidence" value="ECO:0000266"/>
    <property type="project" value="RGD"/>
</dbReference>
<dbReference type="GO" id="GO:0048642">
    <property type="term" value="P:negative regulation of skeletal muscle tissue development"/>
    <property type="evidence" value="ECO:0000266"/>
    <property type="project" value="RGD"/>
</dbReference>
<dbReference type="GO" id="GO:0000122">
    <property type="term" value="P:negative regulation of transcription by RNA polymerase II"/>
    <property type="evidence" value="ECO:0000315"/>
    <property type="project" value="RGD"/>
</dbReference>
<dbReference type="GO" id="GO:2000767">
    <property type="term" value="P:positive regulation of cytoplasmic translation"/>
    <property type="evidence" value="ECO:0000266"/>
    <property type="project" value="RGD"/>
</dbReference>
<dbReference type="GO" id="GO:0046622">
    <property type="term" value="P:positive regulation of organ growth"/>
    <property type="evidence" value="ECO:0000266"/>
    <property type="project" value="RGD"/>
</dbReference>
<dbReference type="GO" id="GO:0010468">
    <property type="term" value="P:regulation of gene expression"/>
    <property type="evidence" value="ECO:0000318"/>
    <property type="project" value="GO_Central"/>
</dbReference>
<dbReference type="GO" id="GO:0007283">
    <property type="term" value="P:spermatogenesis"/>
    <property type="evidence" value="ECO:0000270"/>
    <property type="project" value="RGD"/>
</dbReference>
<dbReference type="CDD" id="cd04458">
    <property type="entry name" value="CSP_CDS"/>
    <property type="match status" value="1"/>
</dbReference>
<dbReference type="FunFam" id="2.40.50.140:FF:000054">
    <property type="entry name" value="Nuclease-sensitive element-binding protein 1"/>
    <property type="match status" value="1"/>
</dbReference>
<dbReference type="Gene3D" id="2.40.50.140">
    <property type="entry name" value="Nucleic acid-binding proteins"/>
    <property type="match status" value="1"/>
</dbReference>
<dbReference type="InterPro" id="IPR050181">
    <property type="entry name" value="Cold_shock_domain"/>
</dbReference>
<dbReference type="InterPro" id="IPR011129">
    <property type="entry name" value="CSD"/>
</dbReference>
<dbReference type="InterPro" id="IPR019844">
    <property type="entry name" value="CSD_CS"/>
</dbReference>
<dbReference type="InterPro" id="IPR002059">
    <property type="entry name" value="CSP_DNA-bd"/>
</dbReference>
<dbReference type="InterPro" id="IPR012340">
    <property type="entry name" value="NA-bd_OB-fold"/>
</dbReference>
<dbReference type="PANTHER" id="PTHR11544">
    <property type="entry name" value="COLD SHOCK DOMAIN CONTAINING PROTEINS"/>
    <property type="match status" value="1"/>
</dbReference>
<dbReference type="Pfam" id="PF00313">
    <property type="entry name" value="CSD"/>
    <property type="match status" value="1"/>
</dbReference>
<dbReference type="PRINTS" id="PR00050">
    <property type="entry name" value="COLDSHOCK"/>
</dbReference>
<dbReference type="SMART" id="SM00357">
    <property type="entry name" value="CSP"/>
    <property type="match status" value="1"/>
</dbReference>
<dbReference type="SUPFAM" id="SSF50249">
    <property type="entry name" value="Nucleic acid-binding proteins"/>
    <property type="match status" value="1"/>
</dbReference>
<dbReference type="PROSITE" id="PS00352">
    <property type="entry name" value="CSD_1"/>
    <property type="match status" value="1"/>
</dbReference>
<dbReference type="PROSITE" id="PS51857">
    <property type="entry name" value="CSD_2"/>
    <property type="match status" value="1"/>
</dbReference>
<organism>
    <name type="scientific">Rattus norvegicus</name>
    <name type="common">Rat</name>
    <dbReference type="NCBI Taxonomy" id="10116"/>
    <lineage>
        <taxon>Eukaryota</taxon>
        <taxon>Metazoa</taxon>
        <taxon>Chordata</taxon>
        <taxon>Craniata</taxon>
        <taxon>Vertebrata</taxon>
        <taxon>Euteleostomi</taxon>
        <taxon>Mammalia</taxon>
        <taxon>Eutheria</taxon>
        <taxon>Euarchontoglires</taxon>
        <taxon>Glires</taxon>
        <taxon>Rodentia</taxon>
        <taxon>Myomorpha</taxon>
        <taxon>Muroidea</taxon>
        <taxon>Muridae</taxon>
        <taxon>Murinae</taxon>
        <taxon>Rattus</taxon>
    </lineage>
</organism>
<keyword id="KW-0007">Acetylation</keyword>
<keyword id="KW-0025">Alternative splicing</keyword>
<keyword id="KW-0963">Cytoplasm</keyword>
<keyword id="KW-0238">DNA-binding</keyword>
<keyword id="KW-0488">Methylation</keyword>
<keyword id="KW-0539">Nucleus</keyword>
<keyword id="KW-0597">Phosphoprotein</keyword>
<keyword id="KW-1185">Reference proteome</keyword>
<keyword id="KW-0678">Repressor</keyword>
<keyword id="KW-0804">Transcription</keyword>
<keyword id="KW-0805">Transcription regulation</keyword>
<evidence type="ECO:0000250" key="1"/>
<evidence type="ECO:0000250" key="2">
    <source>
        <dbReference type="UniProtKB" id="P16989"/>
    </source>
</evidence>
<evidence type="ECO:0000250" key="3">
    <source>
        <dbReference type="UniProtKB" id="Q9JKB3"/>
    </source>
</evidence>
<evidence type="ECO:0000256" key="4">
    <source>
        <dbReference type="SAM" id="MobiDB-lite"/>
    </source>
</evidence>
<evidence type="ECO:0000305" key="5"/>
<evidence type="ECO:0007744" key="6">
    <source>
    </source>
</evidence>
<accession>Q62764</accession>
<accession>Q63748</accession>
<reference key="1">
    <citation type="submission" date="1995-03" db="EMBL/GenBank/DDBJ databases">
        <title>Characterization of muscle Y-box proteins that bind the nAChR delta subunit promoter.</title>
        <authorList>
            <person name="Goldman D."/>
            <person name="Gao J."/>
            <person name="Burmeister M."/>
            <person name="Sapru M."/>
        </authorList>
    </citation>
    <scope>NUCLEOTIDE SEQUENCE [MRNA]</scope>
    <source>
        <strain>Sprague-Dawley</strain>
    </source>
</reference>
<reference key="2">
    <citation type="journal article" date="1994" name="Nucleic Acids Res.">
        <title>A novel growth-inducible gene that encodes a protein with a conserved cold-shock domain.</title>
        <authorList>
            <person name="Ito K."/>
            <person name="Tsutsumi K."/>
            <person name="Kuzumaki T."/>
            <person name="Gomez P.F."/>
            <person name="Otsu K."/>
            <person name="Ishikawa K."/>
        </authorList>
    </citation>
    <scope>NUCLEOTIDE SEQUENCE [MRNA]</scope>
    <source>
        <strain>Wistar</strain>
        <tissue>Liver</tissue>
    </source>
</reference>
<reference key="3">
    <citation type="journal article" date="2012" name="Nat. Commun.">
        <title>Quantitative maps of protein phosphorylation sites across 14 different rat organs and tissues.</title>
        <authorList>
            <person name="Lundby A."/>
            <person name="Secher A."/>
            <person name="Lage K."/>
            <person name="Nordsborg N.B."/>
            <person name="Dmytriyev A."/>
            <person name="Lundby C."/>
            <person name="Olsen J.V."/>
        </authorList>
    </citation>
    <scope>PHOSPHORYLATION [LARGE SCALE ANALYSIS] AT SER-2; SER-33; SER-52; SER-193; SER-195; SER-196; SER-335; SER-358 AND SER-359</scope>
    <scope>IDENTIFICATION BY MASS SPECTROMETRY [LARGE SCALE ANALYSIS]</scope>
</reference>